<accession>A9BR02</accession>
<gene>
    <name type="primary">alr</name>
    <name type="ordered locus">Daci_0311</name>
</gene>
<name>ALR_DELAS</name>
<comment type="function">
    <text evidence="1">Catalyzes the interconversion of L-alanine and D-alanine. May also act on other amino acids.</text>
</comment>
<comment type="catalytic activity">
    <reaction evidence="1">
        <text>L-alanine = D-alanine</text>
        <dbReference type="Rhea" id="RHEA:20249"/>
        <dbReference type="ChEBI" id="CHEBI:57416"/>
        <dbReference type="ChEBI" id="CHEBI:57972"/>
        <dbReference type="EC" id="5.1.1.1"/>
    </reaction>
</comment>
<comment type="cofactor">
    <cofactor evidence="1">
        <name>pyridoxal 5'-phosphate</name>
        <dbReference type="ChEBI" id="CHEBI:597326"/>
    </cofactor>
</comment>
<comment type="pathway">
    <text evidence="1">Amino-acid biosynthesis; D-alanine biosynthesis; D-alanine from L-alanine: step 1/1.</text>
</comment>
<comment type="similarity">
    <text evidence="1">Belongs to the alanine racemase family.</text>
</comment>
<protein>
    <recommendedName>
        <fullName evidence="1">Alanine racemase</fullName>
        <ecNumber evidence="1">5.1.1.1</ecNumber>
    </recommendedName>
</protein>
<evidence type="ECO:0000255" key="1">
    <source>
        <dbReference type="HAMAP-Rule" id="MF_01201"/>
    </source>
</evidence>
<dbReference type="EC" id="5.1.1.1" evidence="1"/>
<dbReference type="EMBL" id="CP000884">
    <property type="protein sequence ID" value="ABX32957.1"/>
    <property type="molecule type" value="Genomic_DNA"/>
</dbReference>
<dbReference type="RefSeq" id="WP_012202250.1">
    <property type="nucleotide sequence ID" value="NC_010002.1"/>
</dbReference>
<dbReference type="SMR" id="A9BR02"/>
<dbReference type="STRING" id="398578.Daci_0311"/>
<dbReference type="GeneID" id="24115112"/>
<dbReference type="KEGG" id="dac:Daci_0311"/>
<dbReference type="eggNOG" id="COG0787">
    <property type="taxonomic scope" value="Bacteria"/>
</dbReference>
<dbReference type="HOGENOM" id="CLU_028393_1_0_4"/>
<dbReference type="UniPathway" id="UPA00042">
    <property type="reaction ID" value="UER00497"/>
</dbReference>
<dbReference type="Proteomes" id="UP000000784">
    <property type="component" value="Chromosome"/>
</dbReference>
<dbReference type="GO" id="GO:0005829">
    <property type="term" value="C:cytosol"/>
    <property type="evidence" value="ECO:0007669"/>
    <property type="project" value="TreeGrafter"/>
</dbReference>
<dbReference type="GO" id="GO:0008784">
    <property type="term" value="F:alanine racemase activity"/>
    <property type="evidence" value="ECO:0007669"/>
    <property type="project" value="UniProtKB-UniRule"/>
</dbReference>
<dbReference type="GO" id="GO:0030170">
    <property type="term" value="F:pyridoxal phosphate binding"/>
    <property type="evidence" value="ECO:0007669"/>
    <property type="project" value="UniProtKB-UniRule"/>
</dbReference>
<dbReference type="GO" id="GO:0030632">
    <property type="term" value="P:D-alanine biosynthetic process"/>
    <property type="evidence" value="ECO:0007669"/>
    <property type="project" value="UniProtKB-UniRule"/>
</dbReference>
<dbReference type="CDD" id="cd06827">
    <property type="entry name" value="PLPDE_III_AR_proteobact"/>
    <property type="match status" value="1"/>
</dbReference>
<dbReference type="FunFam" id="3.20.20.10:FF:000002">
    <property type="entry name" value="Alanine racemase"/>
    <property type="match status" value="1"/>
</dbReference>
<dbReference type="Gene3D" id="3.20.20.10">
    <property type="entry name" value="Alanine racemase"/>
    <property type="match status" value="1"/>
</dbReference>
<dbReference type="Gene3D" id="2.40.37.10">
    <property type="entry name" value="Lyase, Ornithine Decarboxylase, Chain A, domain 1"/>
    <property type="match status" value="1"/>
</dbReference>
<dbReference type="HAMAP" id="MF_01201">
    <property type="entry name" value="Ala_racemase"/>
    <property type="match status" value="1"/>
</dbReference>
<dbReference type="InterPro" id="IPR000821">
    <property type="entry name" value="Ala_racemase"/>
</dbReference>
<dbReference type="InterPro" id="IPR009006">
    <property type="entry name" value="Ala_racemase/Decarboxylase_C"/>
</dbReference>
<dbReference type="InterPro" id="IPR011079">
    <property type="entry name" value="Ala_racemase_C"/>
</dbReference>
<dbReference type="InterPro" id="IPR001608">
    <property type="entry name" value="Ala_racemase_N"/>
</dbReference>
<dbReference type="InterPro" id="IPR020622">
    <property type="entry name" value="Ala_racemase_pyridoxalP-BS"/>
</dbReference>
<dbReference type="InterPro" id="IPR029066">
    <property type="entry name" value="PLP-binding_barrel"/>
</dbReference>
<dbReference type="NCBIfam" id="TIGR00492">
    <property type="entry name" value="alr"/>
    <property type="match status" value="1"/>
</dbReference>
<dbReference type="PANTHER" id="PTHR30511">
    <property type="entry name" value="ALANINE RACEMASE"/>
    <property type="match status" value="1"/>
</dbReference>
<dbReference type="PANTHER" id="PTHR30511:SF0">
    <property type="entry name" value="ALANINE RACEMASE, CATABOLIC-RELATED"/>
    <property type="match status" value="1"/>
</dbReference>
<dbReference type="Pfam" id="PF00842">
    <property type="entry name" value="Ala_racemase_C"/>
    <property type="match status" value="1"/>
</dbReference>
<dbReference type="Pfam" id="PF01168">
    <property type="entry name" value="Ala_racemase_N"/>
    <property type="match status" value="1"/>
</dbReference>
<dbReference type="PRINTS" id="PR00992">
    <property type="entry name" value="ALARACEMASE"/>
</dbReference>
<dbReference type="SMART" id="SM01005">
    <property type="entry name" value="Ala_racemase_C"/>
    <property type="match status" value="1"/>
</dbReference>
<dbReference type="SUPFAM" id="SSF50621">
    <property type="entry name" value="Alanine racemase C-terminal domain-like"/>
    <property type="match status" value="1"/>
</dbReference>
<dbReference type="SUPFAM" id="SSF51419">
    <property type="entry name" value="PLP-binding barrel"/>
    <property type="match status" value="1"/>
</dbReference>
<dbReference type="PROSITE" id="PS00395">
    <property type="entry name" value="ALANINE_RACEMASE"/>
    <property type="match status" value="1"/>
</dbReference>
<feature type="chain" id="PRO_1000138594" description="Alanine racemase">
    <location>
        <begin position="1"/>
        <end position="367"/>
    </location>
</feature>
<feature type="active site" description="Proton acceptor; specific for D-alanine" evidence="1">
    <location>
        <position position="35"/>
    </location>
</feature>
<feature type="active site" description="Proton acceptor; specific for L-alanine" evidence="1">
    <location>
        <position position="259"/>
    </location>
</feature>
<feature type="binding site" evidence="1">
    <location>
        <position position="130"/>
    </location>
    <ligand>
        <name>substrate</name>
    </ligand>
</feature>
<feature type="binding site" evidence="1">
    <location>
        <position position="307"/>
    </location>
    <ligand>
        <name>substrate</name>
    </ligand>
</feature>
<feature type="modified residue" description="N6-(pyridoxal phosphate)lysine" evidence="1">
    <location>
        <position position="35"/>
    </location>
</feature>
<reference key="1">
    <citation type="submission" date="2007-11" db="EMBL/GenBank/DDBJ databases">
        <title>Complete sequence of Delftia acidovorans DSM 14801 / SPH-1.</title>
        <authorList>
            <person name="Copeland A."/>
            <person name="Lucas S."/>
            <person name="Lapidus A."/>
            <person name="Barry K."/>
            <person name="Glavina del Rio T."/>
            <person name="Dalin E."/>
            <person name="Tice H."/>
            <person name="Pitluck S."/>
            <person name="Lowry S."/>
            <person name="Clum A."/>
            <person name="Schmutz J."/>
            <person name="Larimer F."/>
            <person name="Land M."/>
            <person name="Hauser L."/>
            <person name="Kyrpides N."/>
            <person name="Kim E."/>
            <person name="Schleheck D."/>
            <person name="Richardson P."/>
        </authorList>
    </citation>
    <scope>NUCLEOTIDE SEQUENCE [LARGE SCALE GENOMIC DNA]</scope>
    <source>
        <strain>DSM 14801 / SPH-1</strain>
    </source>
</reference>
<proteinExistence type="inferred from homology"/>
<sequence length="367" mass="39850">MPRPILATIHSAALRHNLERVRQAVPDAKLWAVVKANAYGHGIENVFEALRGADGFAMLDLAEAERVRQLGWRGPILLLEGVFEPRDLELCSRLSIWHAVHCDAQIDWLAAHKTQNGHRVFLKMNSGMNRLGFTPERYRAAWARLNALPQVEEISFMTHFSDADAGAGQPGISAQLQRFHDATRDLPGERSVGNSAATLRQGDDALVRCDWVRPGIVLYGSSPDYPQHTAAHWDLQPTQTLSSRIIGVQQLTEGQSVGYGSRFTAEGPLRLGTVACGYADGYPRHCGTGTPVLVNGVRTRTLGCVSMDMLAVDLTPVPDAGMGSEVTLWGRASNGAVLPIDEVAEAAGTLGYELMCAVAPRVNKTID</sequence>
<organism>
    <name type="scientific">Delftia acidovorans (strain DSM 14801 / SPH-1)</name>
    <dbReference type="NCBI Taxonomy" id="398578"/>
    <lineage>
        <taxon>Bacteria</taxon>
        <taxon>Pseudomonadati</taxon>
        <taxon>Pseudomonadota</taxon>
        <taxon>Betaproteobacteria</taxon>
        <taxon>Burkholderiales</taxon>
        <taxon>Comamonadaceae</taxon>
        <taxon>Delftia</taxon>
    </lineage>
</organism>
<keyword id="KW-0413">Isomerase</keyword>
<keyword id="KW-0663">Pyridoxal phosphate</keyword>
<keyword id="KW-1185">Reference proteome</keyword>